<dbReference type="EC" id="2.1.1.177" evidence="1"/>
<dbReference type="EMBL" id="CP001638">
    <property type="protein sequence ID" value="ACS26039.1"/>
    <property type="molecule type" value="Genomic_DNA"/>
</dbReference>
<dbReference type="SMR" id="C5D9W1"/>
<dbReference type="STRING" id="471223.GWCH70_3402"/>
<dbReference type="KEGG" id="gwc:GWCH70_3402"/>
<dbReference type="eggNOG" id="COG1576">
    <property type="taxonomic scope" value="Bacteria"/>
</dbReference>
<dbReference type="HOGENOM" id="CLU_100552_0_0_9"/>
<dbReference type="OrthoDB" id="9806643at2"/>
<dbReference type="GO" id="GO:0005737">
    <property type="term" value="C:cytoplasm"/>
    <property type="evidence" value="ECO:0007669"/>
    <property type="project" value="UniProtKB-SubCell"/>
</dbReference>
<dbReference type="GO" id="GO:0070038">
    <property type="term" value="F:rRNA (pseudouridine-N3-)-methyltransferase activity"/>
    <property type="evidence" value="ECO:0007669"/>
    <property type="project" value="UniProtKB-UniRule"/>
</dbReference>
<dbReference type="CDD" id="cd18081">
    <property type="entry name" value="RlmH-like"/>
    <property type="match status" value="1"/>
</dbReference>
<dbReference type="Gene3D" id="3.40.1280.10">
    <property type="match status" value="1"/>
</dbReference>
<dbReference type="HAMAP" id="MF_00658">
    <property type="entry name" value="23SrRNA_methyltr_H"/>
    <property type="match status" value="1"/>
</dbReference>
<dbReference type="InterPro" id="IPR029028">
    <property type="entry name" value="Alpha/beta_knot_MTases"/>
</dbReference>
<dbReference type="InterPro" id="IPR003742">
    <property type="entry name" value="RlmH-like"/>
</dbReference>
<dbReference type="InterPro" id="IPR029026">
    <property type="entry name" value="tRNA_m1G_MTases_N"/>
</dbReference>
<dbReference type="NCBIfam" id="NF000985">
    <property type="entry name" value="PRK00103.1-3"/>
    <property type="match status" value="1"/>
</dbReference>
<dbReference type="NCBIfam" id="TIGR00246">
    <property type="entry name" value="tRNA_RlmH_YbeA"/>
    <property type="match status" value="1"/>
</dbReference>
<dbReference type="PANTHER" id="PTHR33603">
    <property type="entry name" value="METHYLTRANSFERASE"/>
    <property type="match status" value="1"/>
</dbReference>
<dbReference type="PANTHER" id="PTHR33603:SF1">
    <property type="entry name" value="RIBOSOMAL RNA LARGE SUBUNIT METHYLTRANSFERASE H"/>
    <property type="match status" value="1"/>
</dbReference>
<dbReference type="Pfam" id="PF02590">
    <property type="entry name" value="SPOUT_MTase"/>
    <property type="match status" value="1"/>
</dbReference>
<dbReference type="PIRSF" id="PIRSF004505">
    <property type="entry name" value="MT_bac"/>
    <property type="match status" value="1"/>
</dbReference>
<dbReference type="SUPFAM" id="SSF75217">
    <property type="entry name" value="alpha/beta knot"/>
    <property type="match status" value="1"/>
</dbReference>
<accession>C5D9W1</accession>
<name>RLMH_GEOSW</name>
<organism>
    <name type="scientific">Geobacillus sp. (strain WCH70)</name>
    <dbReference type="NCBI Taxonomy" id="471223"/>
    <lineage>
        <taxon>Bacteria</taxon>
        <taxon>Bacillati</taxon>
        <taxon>Bacillota</taxon>
        <taxon>Bacilli</taxon>
        <taxon>Bacillales</taxon>
        <taxon>Anoxybacillaceae</taxon>
        <taxon>Geobacillus</taxon>
    </lineage>
</organism>
<keyword id="KW-0963">Cytoplasm</keyword>
<keyword id="KW-0489">Methyltransferase</keyword>
<keyword id="KW-0698">rRNA processing</keyword>
<keyword id="KW-0949">S-adenosyl-L-methionine</keyword>
<keyword id="KW-0808">Transferase</keyword>
<protein>
    <recommendedName>
        <fullName evidence="1">Ribosomal RNA large subunit methyltransferase H</fullName>
        <ecNumber evidence="1">2.1.1.177</ecNumber>
    </recommendedName>
    <alternativeName>
        <fullName evidence="1">23S rRNA (pseudouridine1915-N3)-methyltransferase</fullName>
    </alternativeName>
    <alternativeName>
        <fullName evidence="1">23S rRNA m3Psi1915 methyltransferase</fullName>
    </alternativeName>
    <alternativeName>
        <fullName evidence="1">rRNA (pseudouridine-N3-)-methyltransferase RlmH</fullName>
    </alternativeName>
</protein>
<reference key="1">
    <citation type="submission" date="2009-06" db="EMBL/GenBank/DDBJ databases">
        <title>Complete sequence of chromosome of Geopacillus sp. WCH70.</title>
        <authorList>
            <consortium name="US DOE Joint Genome Institute"/>
            <person name="Lucas S."/>
            <person name="Copeland A."/>
            <person name="Lapidus A."/>
            <person name="Glavina del Rio T."/>
            <person name="Dalin E."/>
            <person name="Tice H."/>
            <person name="Bruce D."/>
            <person name="Goodwin L."/>
            <person name="Pitluck S."/>
            <person name="Chertkov O."/>
            <person name="Brettin T."/>
            <person name="Detter J.C."/>
            <person name="Han C."/>
            <person name="Larimer F."/>
            <person name="Land M."/>
            <person name="Hauser L."/>
            <person name="Kyrpides N."/>
            <person name="Mikhailova N."/>
            <person name="Brumm P."/>
            <person name="Mead D.A."/>
            <person name="Richardson P."/>
        </authorList>
    </citation>
    <scope>NUCLEOTIDE SEQUENCE [LARGE SCALE GENOMIC DNA]</scope>
    <source>
        <strain>WCH70</strain>
    </source>
</reference>
<proteinExistence type="inferred from homology"/>
<sequence length="159" mass="18224">MHIHIISVGKLKEKYLMQGIDEYKKRLSSYAKVDIIEVPDEKAPEHLSEQEMEQIKQREGERILAKIPNDAYVIALAIEGKMKSSEQFAASLDKLATYGKSKIAFIIGGSLGLSKQVMQRADEALSFSKMTFPHQLMRLILLEQIYRAFRINRGEPYHK</sequence>
<gene>
    <name evidence="1" type="primary">rlmH</name>
    <name type="ordered locus">GWCH70_3402</name>
</gene>
<evidence type="ECO:0000255" key="1">
    <source>
        <dbReference type="HAMAP-Rule" id="MF_00658"/>
    </source>
</evidence>
<feature type="chain" id="PRO_1000212457" description="Ribosomal RNA large subunit methyltransferase H">
    <location>
        <begin position="1"/>
        <end position="159"/>
    </location>
</feature>
<feature type="binding site" evidence="1">
    <location>
        <position position="76"/>
    </location>
    <ligand>
        <name>S-adenosyl-L-methionine</name>
        <dbReference type="ChEBI" id="CHEBI:59789"/>
    </ligand>
</feature>
<feature type="binding site" evidence="1">
    <location>
        <position position="108"/>
    </location>
    <ligand>
        <name>S-adenosyl-L-methionine</name>
        <dbReference type="ChEBI" id="CHEBI:59789"/>
    </ligand>
</feature>
<feature type="binding site" evidence="1">
    <location>
        <begin position="127"/>
        <end position="132"/>
    </location>
    <ligand>
        <name>S-adenosyl-L-methionine</name>
        <dbReference type="ChEBI" id="CHEBI:59789"/>
    </ligand>
</feature>
<comment type="function">
    <text evidence="1">Specifically methylates the pseudouridine at position 1915 (m3Psi1915) in 23S rRNA.</text>
</comment>
<comment type="catalytic activity">
    <reaction evidence="1">
        <text>pseudouridine(1915) in 23S rRNA + S-adenosyl-L-methionine = N(3)-methylpseudouridine(1915) in 23S rRNA + S-adenosyl-L-homocysteine + H(+)</text>
        <dbReference type="Rhea" id="RHEA:42752"/>
        <dbReference type="Rhea" id="RHEA-COMP:10221"/>
        <dbReference type="Rhea" id="RHEA-COMP:10222"/>
        <dbReference type="ChEBI" id="CHEBI:15378"/>
        <dbReference type="ChEBI" id="CHEBI:57856"/>
        <dbReference type="ChEBI" id="CHEBI:59789"/>
        <dbReference type="ChEBI" id="CHEBI:65314"/>
        <dbReference type="ChEBI" id="CHEBI:74486"/>
        <dbReference type="EC" id="2.1.1.177"/>
    </reaction>
</comment>
<comment type="subunit">
    <text evidence="1">Homodimer.</text>
</comment>
<comment type="subcellular location">
    <subcellularLocation>
        <location evidence="1">Cytoplasm</location>
    </subcellularLocation>
</comment>
<comment type="similarity">
    <text evidence="1">Belongs to the RNA methyltransferase RlmH family.</text>
</comment>